<protein>
    <recommendedName>
        <fullName evidence="1">Isocitrate dehydrogenase kinase/phosphatase</fullName>
        <shortName evidence="1">IDH kinase/phosphatase</shortName>
        <shortName evidence="1">IDHK/P</shortName>
        <ecNumber evidence="1">2.7.11.5</ecNumber>
        <ecNumber evidence="1">3.1.3.-</ecNumber>
    </recommendedName>
</protein>
<gene>
    <name evidence="1" type="primary">aceK</name>
    <name type="ordered locus">SeD_A4595</name>
</gene>
<proteinExistence type="inferred from homology"/>
<keyword id="KW-0067">ATP-binding</keyword>
<keyword id="KW-0963">Cytoplasm</keyword>
<keyword id="KW-0329">Glyoxylate bypass</keyword>
<keyword id="KW-0378">Hydrolase</keyword>
<keyword id="KW-0418">Kinase</keyword>
<keyword id="KW-0547">Nucleotide-binding</keyword>
<keyword id="KW-0904">Protein phosphatase</keyword>
<keyword id="KW-0723">Serine/threonine-protein kinase</keyword>
<keyword id="KW-0808">Transferase</keyword>
<keyword id="KW-0816">Tricarboxylic acid cycle</keyword>
<evidence type="ECO:0000255" key="1">
    <source>
        <dbReference type="HAMAP-Rule" id="MF_00747"/>
    </source>
</evidence>
<feature type="chain" id="PRO_1000133278" description="Isocitrate dehydrogenase kinase/phosphatase">
    <location>
        <begin position="1"/>
        <end position="583"/>
    </location>
</feature>
<feature type="active site" evidence="1">
    <location>
        <position position="371"/>
    </location>
</feature>
<feature type="binding site" evidence="1">
    <location>
        <begin position="315"/>
        <end position="321"/>
    </location>
    <ligand>
        <name>ATP</name>
        <dbReference type="ChEBI" id="CHEBI:30616"/>
    </ligand>
</feature>
<feature type="binding site" evidence="1">
    <location>
        <position position="336"/>
    </location>
    <ligand>
        <name>ATP</name>
        <dbReference type="ChEBI" id="CHEBI:30616"/>
    </ligand>
</feature>
<organism>
    <name type="scientific">Salmonella dublin (strain CT_02021853)</name>
    <dbReference type="NCBI Taxonomy" id="439851"/>
    <lineage>
        <taxon>Bacteria</taxon>
        <taxon>Pseudomonadati</taxon>
        <taxon>Pseudomonadota</taxon>
        <taxon>Gammaproteobacteria</taxon>
        <taxon>Enterobacterales</taxon>
        <taxon>Enterobacteriaceae</taxon>
        <taxon>Salmonella</taxon>
    </lineage>
</organism>
<accession>B5FQM6</accession>
<dbReference type="EC" id="2.7.11.5" evidence="1"/>
<dbReference type="EC" id="3.1.3.-" evidence="1"/>
<dbReference type="EMBL" id="CP001144">
    <property type="protein sequence ID" value="ACH77515.1"/>
    <property type="molecule type" value="Genomic_DNA"/>
</dbReference>
<dbReference type="RefSeq" id="WP_001137273.1">
    <property type="nucleotide sequence ID" value="NC_011205.1"/>
</dbReference>
<dbReference type="SMR" id="B5FQM6"/>
<dbReference type="KEGG" id="sed:SeD_A4595"/>
<dbReference type="HOGENOM" id="CLU_033804_1_1_6"/>
<dbReference type="Proteomes" id="UP000008322">
    <property type="component" value="Chromosome"/>
</dbReference>
<dbReference type="GO" id="GO:0005737">
    <property type="term" value="C:cytoplasm"/>
    <property type="evidence" value="ECO:0007669"/>
    <property type="project" value="UniProtKB-SubCell"/>
</dbReference>
<dbReference type="GO" id="GO:0008772">
    <property type="term" value="F:[isocitrate dehydrogenase (NADP+)] kinase activity"/>
    <property type="evidence" value="ECO:0007669"/>
    <property type="project" value="UniProtKB-UniRule"/>
</dbReference>
<dbReference type="GO" id="GO:0016208">
    <property type="term" value="F:AMP binding"/>
    <property type="evidence" value="ECO:0007669"/>
    <property type="project" value="TreeGrafter"/>
</dbReference>
<dbReference type="GO" id="GO:0005524">
    <property type="term" value="F:ATP binding"/>
    <property type="evidence" value="ECO:0007669"/>
    <property type="project" value="UniProtKB-UniRule"/>
</dbReference>
<dbReference type="GO" id="GO:0004721">
    <property type="term" value="F:phosphoprotein phosphatase activity"/>
    <property type="evidence" value="ECO:0007669"/>
    <property type="project" value="UniProtKB-KW"/>
</dbReference>
<dbReference type="GO" id="GO:0004674">
    <property type="term" value="F:protein serine/threonine kinase activity"/>
    <property type="evidence" value="ECO:0007669"/>
    <property type="project" value="UniProtKB-KW"/>
</dbReference>
<dbReference type="GO" id="GO:0006006">
    <property type="term" value="P:glucose metabolic process"/>
    <property type="evidence" value="ECO:0007669"/>
    <property type="project" value="InterPro"/>
</dbReference>
<dbReference type="GO" id="GO:0006097">
    <property type="term" value="P:glyoxylate cycle"/>
    <property type="evidence" value="ECO:0007669"/>
    <property type="project" value="UniProtKB-UniRule"/>
</dbReference>
<dbReference type="GO" id="GO:0006099">
    <property type="term" value="P:tricarboxylic acid cycle"/>
    <property type="evidence" value="ECO:0007669"/>
    <property type="project" value="UniProtKB-UniRule"/>
</dbReference>
<dbReference type="HAMAP" id="MF_00747">
    <property type="entry name" value="AceK"/>
    <property type="match status" value="1"/>
</dbReference>
<dbReference type="InterPro" id="IPR046855">
    <property type="entry name" value="AceK_kinase"/>
</dbReference>
<dbReference type="InterPro" id="IPR046854">
    <property type="entry name" value="AceK_regulatory"/>
</dbReference>
<dbReference type="InterPro" id="IPR010452">
    <property type="entry name" value="Isocitrate_DH_AceK"/>
</dbReference>
<dbReference type="NCBIfam" id="NF002804">
    <property type="entry name" value="PRK02946.1"/>
    <property type="match status" value="1"/>
</dbReference>
<dbReference type="PANTHER" id="PTHR39559">
    <property type="match status" value="1"/>
</dbReference>
<dbReference type="PANTHER" id="PTHR39559:SF1">
    <property type="entry name" value="ISOCITRATE DEHYDROGENASE KINASE_PHOSPHATASE"/>
    <property type="match status" value="1"/>
</dbReference>
<dbReference type="Pfam" id="PF06315">
    <property type="entry name" value="AceK_kinase"/>
    <property type="match status" value="1"/>
</dbReference>
<dbReference type="Pfam" id="PF20423">
    <property type="entry name" value="AceK_regulatory"/>
    <property type="match status" value="1"/>
</dbReference>
<dbReference type="PIRSF" id="PIRSF000719">
    <property type="entry name" value="AceK"/>
    <property type="match status" value="1"/>
</dbReference>
<reference key="1">
    <citation type="journal article" date="2011" name="J. Bacteriol.">
        <title>Comparative genomics of 28 Salmonella enterica isolates: evidence for CRISPR-mediated adaptive sublineage evolution.</title>
        <authorList>
            <person name="Fricke W.F."/>
            <person name="Mammel M.K."/>
            <person name="McDermott P.F."/>
            <person name="Tartera C."/>
            <person name="White D.G."/>
            <person name="Leclerc J.E."/>
            <person name="Ravel J."/>
            <person name="Cebula T.A."/>
        </authorList>
    </citation>
    <scope>NUCLEOTIDE SEQUENCE [LARGE SCALE GENOMIC DNA]</scope>
    <source>
        <strain>CT_02021853</strain>
    </source>
</reference>
<comment type="function">
    <text evidence="1">Bifunctional enzyme which can phosphorylate or dephosphorylate isocitrate dehydrogenase (IDH) on a specific serine residue. This is a regulatory mechanism which enables bacteria to bypass the Krebs cycle via the glyoxylate shunt in response to the source of carbon. When bacteria are grown on glucose, IDH is fully active and unphosphorylated, but when grown on acetate or ethanol, the activity of IDH declines drastically concomitant with its phosphorylation.</text>
</comment>
<comment type="catalytic activity">
    <reaction evidence="1">
        <text>L-seryl-[isocitrate dehydrogenase] + ATP = O-phospho-L-seryl-[isocitrate dehydrogenase] + ADP + H(+)</text>
        <dbReference type="Rhea" id="RHEA:43540"/>
        <dbReference type="Rhea" id="RHEA-COMP:10605"/>
        <dbReference type="Rhea" id="RHEA-COMP:10606"/>
        <dbReference type="ChEBI" id="CHEBI:15378"/>
        <dbReference type="ChEBI" id="CHEBI:29999"/>
        <dbReference type="ChEBI" id="CHEBI:30616"/>
        <dbReference type="ChEBI" id="CHEBI:83421"/>
        <dbReference type="ChEBI" id="CHEBI:456216"/>
        <dbReference type="EC" id="2.7.11.5"/>
    </reaction>
</comment>
<comment type="subcellular location">
    <subcellularLocation>
        <location evidence="1">Cytoplasm</location>
    </subcellularLocation>
</comment>
<comment type="similarity">
    <text evidence="1">Belongs to the AceK family.</text>
</comment>
<sequence>MPRGLELLIAQTILQGFDAQYGRFLEVTSGAQQRFEQADWHAVQQAMKSRIHLYDHHVGLVVEQLRCITDGKSTDADFLLRVKEHYTRLLPDYPRFEIAESFFNSVYCRLFDHRSLTPERLFIFSSQPERRFRTIPRPLAKDFFPDHGWETLLMRILSDLPLRLPWQNKSRDIRYIIAHLTETLGEDALPCCHVQVANELFYRNKAAWLVGKLTTPDGTLPFLLPIHRTDEGELFVDTCLTTTAEASIVFGFARSYFMVYAPLPAALVEWLREILPGKTTAELYMAIGCQKHAKTESYREYLCYLAESDEKFIEAPGIRGMVMLVFTLPGFDRVFKIIKDKFAPQKEMSAAHVRACYQLVKEHDRVGRMADTQEFENFVLDKRQIDPALMALLRQEAPEKITDLGEHIVIRHLYIERRMVPLNIWLEQVEGQQLRDAIEEYGNAIRQLAAANIFPGDMLFKNFGVTRHGRVVFYDYDEICYMTEVNFRDIPPARYPEDELASEPWYSVSPGDVFPEEFRHWLCADPRIGPLFEEMHADLFRADYWRALQTRIKEGHVEDVYAYRRRQRFSVRYGAISSTANSS</sequence>
<name>ACEK_SALDC</name>